<comment type="function">
    <text evidence="4">3'-5' exonuclease acting on single-stranded DNA (ssDNA) and RNA (ssRNA) substrates. Displays ssDNA-stimulated ATPase activity, but lacks helicase activity.</text>
</comment>
<comment type="activity regulation">
    <text evidence="4">The nuclease activity is inhibited by ATP or ADP.</text>
</comment>
<comment type="biophysicochemical properties">
    <kinetics>
        <text evidence="4">kcat is 25 min(-1) for ATPase activity in the absence of DNA. kcat is 78 min(-1) for ATPase activity in the presence of ssDNA.</text>
    </kinetics>
</comment>
<comment type="subunit">
    <text evidence="4">Monomer in solution.</text>
</comment>
<comment type="domain">
    <text evidence="4">Changes in the ATP-binding site of the helicase domain can affect the activity of the nuclease domain.</text>
</comment>
<comment type="similarity">
    <text evidence="1 6">Belongs to the helicase family. DinG subfamily. Type 2 sub-subfamily.</text>
</comment>
<protein>
    <recommendedName>
        <fullName evidence="1 6">3'-5' exonuclease DinG</fullName>
        <ecNumber evidence="1 4">3.1.-.-</ecNumber>
    </recommendedName>
</protein>
<name>DING_STAAR</name>
<accession>Q6GGV4</accession>
<dbReference type="EC" id="3.1.-.-" evidence="1 4"/>
<dbReference type="EMBL" id="BX571856">
    <property type="protein sequence ID" value="CAG40464.1"/>
    <property type="molecule type" value="Genomic_DNA"/>
</dbReference>
<dbReference type="RefSeq" id="WP_000525060.1">
    <property type="nucleotide sequence ID" value="NC_002952.2"/>
</dbReference>
<dbReference type="SMR" id="Q6GGV4"/>
<dbReference type="KEGG" id="sar:SAR1466"/>
<dbReference type="HOGENOM" id="CLU_012117_1_1_9"/>
<dbReference type="Proteomes" id="UP000000596">
    <property type="component" value="Chromosome"/>
</dbReference>
<dbReference type="GO" id="GO:0005829">
    <property type="term" value="C:cytosol"/>
    <property type="evidence" value="ECO:0007669"/>
    <property type="project" value="TreeGrafter"/>
</dbReference>
<dbReference type="GO" id="GO:0008408">
    <property type="term" value="F:3'-5' exonuclease activity"/>
    <property type="evidence" value="ECO:0007669"/>
    <property type="project" value="UniProtKB-UniRule"/>
</dbReference>
<dbReference type="GO" id="GO:0005524">
    <property type="term" value="F:ATP binding"/>
    <property type="evidence" value="ECO:0007669"/>
    <property type="project" value="UniProtKB-UniRule"/>
</dbReference>
<dbReference type="GO" id="GO:0003677">
    <property type="term" value="F:DNA binding"/>
    <property type="evidence" value="ECO:0007669"/>
    <property type="project" value="InterPro"/>
</dbReference>
<dbReference type="GO" id="GO:0003887">
    <property type="term" value="F:DNA-directed DNA polymerase activity"/>
    <property type="evidence" value="ECO:0007669"/>
    <property type="project" value="InterPro"/>
</dbReference>
<dbReference type="GO" id="GO:0004386">
    <property type="term" value="F:helicase activity"/>
    <property type="evidence" value="ECO:0007669"/>
    <property type="project" value="InterPro"/>
</dbReference>
<dbReference type="GO" id="GO:0016818">
    <property type="term" value="F:hydrolase activity, acting on acid anhydrides, in phosphorus-containing anhydrides"/>
    <property type="evidence" value="ECO:0007669"/>
    <property type="project" value="InterPro"/>
</dbReference>
<dbReference type="GO" id="GO:0045004">
    <property type="term" value="P:DNA replication proofreading"/>
    <property type="evidence" value="ECO:0007669"/>
    <property type="project" value="TreeGrafter"/>
</dbReference>
<dbReference type="CDD" id="cd06127">
    <property type="entry name" value="DEDDh"/>
    <property type="match status" value="1"/>
</dbReference>
<dbReference type="FunFam" id="3.30.420.10:FF:000045">
    <property type="entry name" value="3'-5' exonuclease DinG"/>
    <property type="match status" value="1"/>
</dbReference>
<dbReference type="FunFam" id="3.40.50.300:FF:001816">
    <property type="entry name" value="3'-5' exonuclease DinG"/>
    <property type="match status" value="1"/>
</dbReference>
<dbReference type="FunFam" id="3.40.50.300:FF:000437">
    <property type="entry name" value="ATP-dependent DNA helicase DinG"/>
    <property type="match status" value="1"/>
</dbReference>
<dbReference type="Gene3D" id="3.40.50.300">
    <property type="entry name" value="P-loop containing nucleotide triphosphate hydrolases"/>
    <property type="match status" value="2"/>
</dbReference>
<dbReference type="Gene3D" id="3.30.420.10">
    <property type="entry name" value="Ribonuclease H-like superfamily/Ribonuclease H"/>
    <property type="match status" value="1"/>
</dbReference>
<dbReference type="HAMAP" id="MF_02206">
    <property type="entry name" value="DinG_exonucl"/>
    <property type="match status" value="1"/>
</dbReference>
<dbReference type="InterPro" id="IPR006555">
    <property type="entry name" value="ATP-dep_Helicase_C"/>
</dbReference>
<dbReference type="InterPro" id="IPR006310">
    <property type="entry name" value="DinG"/>
</dbReference>
<dbReference type="InterPro" id="IPR006054">
    <property type="entry name" value="DnaQ"/>
</dbReference>
<dbReference type="InterPro" id="IPR013520">
    <property type="entry name" value="Exonuclease_RNaseT/DNA_pol3"/>
</dbReference>
<dbReference type="InterPro" id="IPR014013">
    <property type="entry name" value="Helic_SF1/SF2_ATP-bd_DinG/Rad3"/>
</dbReference>
<dbReference type="InterPro" id="IPR027417">
    <property type="entry name" value="P-loop_NTPase"/>
</dbReference>
<dbReference type="InterPro" id="IPR012337">
    <property type="entry name" value="RNaseH-like_sf"/>
</dbReference>
<dbReference type="InterPro" id="IPR036397">
    <property type="entry name" value="RNaseH_sf"/>
</dbReference>
<dbReference type="NCBIfam" id="TIGR01407">
    <property type="entry name" value="dinG_rel"/>
    <property type="match status" value="1"/>
</dbReference>
<dbReference type="NCBIfam" id="TIGR00573">
    <property type="entry name" value="dnaq"/>
    <property type="match status" value="1"/>
</dbReference>
<dbReference type="PANTHER" id="PTHR30231">
    <property type="entry name" value="DNA POLYMERASE III SUBUNIT EPSILON"/>
    <property type="match status" value="1"/>
</dbReference>
<dbReference type="PANTHER" id="PTHR30231:SF41">
    <property type="entry name" value="DNA POLYMERASE III SUBUNIT EPSILON"/>
    <property type="match status" value="1"/>
</dbReference>
<dbReference type="Pfam" id="PF13307">
    <property type="entry name" value="Helicase_C_2"/>
    <property type="match status" value="1"/>
</dbReference>
<dbReference type="Pfam" id="PF00929">
    <property type="entry name" value="RNase_T"/>
    <property type="match status" value="1"/>
</dbReference>
<dbReference type="SMART" id="SM00479">
    <property type="entry name" value="EXOIII"/>
    <property type="match status" value="1"/>
</dbReference>
<dbReference type="SMART" id="SM00491">
    <property type="entry name" value="HELICc2"/>
    <property type="match status" value="1"/>
</dbReference>
<dbReference type="SUPFAM" id="SSF52540">
    <property type="entry name" value="P-loop containing nucleoside triphosphate hydrolases"/>
    <property type="match status" value="1"/>
</dbReference>
<dbReference type="SUPFAM" id="SSF53098">
    <property type="entry name" value="Ribonuclease H-like"/>
    <property type="match status" value="1"/>
</dbReference>
<dbReference type="PROSITE" id="PS51193">
    <property type="entry name" value="HELICASE_ATP_BIND_2"/>
    <property type="match status" value="1"/>
</dbReference>
<dbReference type="PROSITE" id="PS51194">
    <property type="entry name" value="HELICASE_CTER"/>
    <property type="match status" value="1"/>
</dbReference>
<organism>
    <name type="scientific">Staphylococcus aureus (strain MRSA252)</name>
    <dbReference type="NCBI Taxonomy" id="282458"/>
    <lineage>
        <taxon>Bacteria</taxon>
        <taxon>Bacillati</taxon>
        <taxon>Bacillota</taxon>
        <taxon>Bacilli</taxon>
        <taxon>Bacillales</taxon>
        <taxon>Staphylococcaceae</taxon>
        <taxon>Staphylococcus</taxon>
    </lineage>
</organism>
<gene>
    <name evidence="1 5" type="primary">dinG</name>
    <name type="ordered locus">SAR1466</name>
</gene>
<evidence type="ECO:0000255" key="1">
    <source>
        <dbReference type="HAMAP-Rule" id="MF_02206"/>
    </source>
</evidence>
<evidence type="ECO:0000255" key="2">
    <source>
        <dbReference type="PROSITE-ProRule" id="PRU00541"/>
    </source>
</evidence>
<evidence type="ECO:0000255" key="3">
    <source>
        <dbReference type="PROSITE-ProRule" id="PRU00542"/>
    </source>
</evidence>
<evidence type="ECO:0000269" key="4">
    <source>
    </source>
</evidence>
<evidence type="ECO:0000303" key="5">
    <source>
    </source>
</evidence>
<evidence type="ECO:0000305" key="6"/>
<keyword id="KW-0067">ATP-binding</keyword>
<keyword id="KW-0269">Exonuclease</keyword>
<keyword id="KW-0378">Hydrolase</keyword>
<keyword id="KW-0540">Nuclease</keyword>
<keyword id="KW-0547">Nucleotide-binding</keyword>
<reference key="1">
    <citation type="journal article" date="2004" name="Proc. Natl. Acad. Sci. U.S.A.">
        <title>Complete genomes of two clinical Staphylococcus aureus strains: evidence for the rapid evolution of virulence and drug resistance.</title>
        <authorList>
            <person name="Holden M.T.G."/>
            <person name="Feil E.J."/>
            <person name="Lindsay J.A."/>
            <person name="Peacock S.J."/>
            <person name="Day N.P.J."/>
            <person name="Enright M.C."/>
            <person name="Foster T.J."/>
            <person name="Moore C.E."/>
            <person name="Hurst L."/>
            <person name="Atkin R."/>
            <person name="Barron A."/>
            <person name="Bason N."/>
            <person name="Bentley S.D."/>
            <person name="Chillingworth C."/>
            <person name="Chillingworth T."/>
            <person name="Churcher C."/>
            <person name="Clark L."/>
            <person name="Corton C."/>
            <person name="Cronin A."/>
            <person name="Doggett J."/>
            <person name="Dowd L."/>
            <person name="Feltwell T."/>
            <person name="Hance Z."/>
            <person name="Harris B."/>
            <person name="Hauser H."/>
            <person name="Holroyd S."/>
            <person name="Jagels K."/>
            <person name="James K.D."/>
            <person name="Lennard N."/>
            <person name="Line A."/>
            <person name="Mayes R."/>
            <person name="Moule S."/>
            <person name="Mungall K."/>
            <person name="Ormond D."/>
            <person name="Quail M.A."/>
            <person name="Rabbinowitsch E."/>
            <person name="Rutherford K.M."/>
            <person name="Sanders M."/>
            <person name="Sharp S."/>
            <person name="Simmonds M."/>
            <person name="Stevens K."/>
            <person name="Whitehead S."/>
            <person name="Barrell B.G."/>
            <person name="Spratt B.G."/>
            <person name="Parkhill J."/>
        </authorList>
    </citation>
    <scope>NUCLEOTIDE SEQUENCE [LARGE SCALE GENOMIC DNA]</scope>
    <source>
        <strain>MRSA252</strain>
    </source>
</reference>
<reference key="2">
    <citation type="journal article" date="2012" name="Biochem. J.">
        <title>Staphylococcus aureus DinG, a helicase that has evolved into a nuclease.</title>
        <authorList>
            <person name="McRobbie A.M."/>
            <person name="Meyer B."/>
            <person name="Rouillon C."/>
            <person name="Petrovic-Stojanovska B."/>
            <person name="Liu H."/>
            <person name="White M.F."/>
        </authorList>
    </citation>
    <scope>FUNCTION</scope>
    <scope>ACTIVITY REGULATION</scope>
    <scope>BIOPHYSICOCHEMICAL PROPERTIES</scope>
    <scope>SUBUNIT</scope>
    <scope>DOMAIN</scope>
    <scope>MUTAGENESIS OF ASP-10; GLU-12 AND LYS-282</scope>
    <source>
        <strain>MRSA252</strain>
    </source>
</reference>
<proteinExistence type="evidence at protein level"/>
<feature type="chain" id="PRO_0000277594" description="3'-5' exonuclease DinG">
    <location>
        <begin position="1"/>
        <end position="897"/>
    </location>
</feature>
<feature type="domain" description="Exonuclease" evidence="1">
    <location>
        <begin position="8"/>
        <end position="161"/>
    </location>
</feature>
<feature type="domain" description="Helicase ATP-binding" evidence="1 2">
    <location>
        <begin position="241"/>
        <end position="496"/>
    </location>
</feature>
<feature type="domain" description="Helicase C-terminal" evidence="1 3">
    <location>
        <begin position="703"/>
        <end position="893"/>
    </location>
</feature>
<feature type="short sequence motif" description="DEAH box" evidence="1 2">
    <location>
        <begin position="448"/>
        <end position="451"/>
    </location>
</feature>
<feature type="binding site" evidence="1 2">
    <location>
        <begin position="276"/>
        <end position="283"/>
    </location>
    <ligand>
        <name>ATP</name>
        <dbReference type="ChEBI" id="CHEBI:30616"/>
    </ligand>
</feature>
<feature type="mutagenesis site" description="Abolishes nuclease activity; when associated with A-12." evidence="4">
    <original>D</original>
    <variation>A</variation>
    <location>
        <position position="10"/>
    </location>
</feature>
<feature type="mutagenesis site" description="Abolishes nuclease activity; when associated with A-10." evidence="4">
    <original>E</original>
    <variation>A</variation>
    <location>
        <position position="12"/>
    </location>
</feature>
<feature type="mutagenesis site" description="Almost loss of ATPase activity." evidence="4">
    <original>K</original>
    <variation>A</variation>
    <location>
        <position position="282"/>
    </location>
</feature>
<sequence>MGMATYAVVDLETTGNQLDFDDIIQIGITFVRNNQIIDTYHSMIRTNLEIPPFIQALTSIEENMLQQAPYFNQVAEEIYDKIKDCIFVAHNVDFDLNFIKKAFKDCNIQYRPKKVIDTLEIFKIAFPTDKSYQLSELAEAHGITLANAHRADEDAATTAKLMILAFEKFEKLPLDTLKQLYYLSKQLKYDLYDIFFEMVRQYDAKPLDKSYEKFEQIIYRKQVDFKKPTTNYNGSLKSLYSKAVDQLGLTYRPQQLYLAETILDQLMHSEKAMIEASLGSGKSLAYLLAALMYNIETGKHVMISTNTKLLQSQLLEKDIPAMNEALNFKINALLIKSKSDYISLGLISQILKDDTSNYEVNILKMQLLIWITETPSGDIQELNLKGGQKMYFDQKIETYVPARHDVHYYNFIKRNAQNIQIGITNHAHLIHSDVENSIYQLFDDCIVDEAHRLPDYALNQVTNELSYADIKYQLGLIGKNENEKLLKAIDQLEKQRILEKLDIAPIDIFGLKASMNEIHELNEQLFSTIFTIINDSDVYDDDIHRFHNVFTFETKDILKDLHAIIDKLNKTLEIFNGISHKTVKSLRKQLLYLKDKFKNIEQSLKAGHTSFISIKNLSQKSTIRLYVKDYAVKDVLTKQVLEKFKSLIFISGTLKFNHSFDAFKQLFNKDVHFNTFEVNTSLQSAKNTSVFIPSDVASYQYKNIDEYVASIVSYIIEYTTITSSKCLVLFTSYKMMHMVQDMLNELPEFEDYVVLTQQQNQNYKIVQQFNNFDKAILLGTSTFFEGFDFQANGIKCVMIAKLPFMNKHNAKYWLMDSEFTSTFKEYVLPDAVTRFRQGLGRLIRNENDRGIIVSFDDRLINSNYKNFFEQTLENYRQKKGDIQQFGKLLRQIQKKKK</sequence>